<name>RS2_METM5</name>
<evidence type="ECO:0000255" key="1">
    <source>
        <dbReference type="HAMAP-Rule" id="MF_00291"/>
    </source>
</evidence>
<evidence type="ECO:0000305" key="2"/>
<comment type="similarity">
    <text evidence="1">Belongs to the universal ribosomal protein uS2 family.</text>
</comment>
<reference key="1">
    <citation type="submission" date="2007-03" db="EMBL/GenBank/DDBJ databases">
        <title>Complete sequence of chromosome of Methanococcus maripaludis C5.</title>
        <authorList>
            <consortium name="US DOE Joint Genome Institute"/>
            <person name="Copeland A."/>
            <person name="Lucas S."/>
            <person name="Lapidus A."/>
            <person name="Barry K."/>
            <person name="Glavina del Rio T."/>
            <person name="Dalin E."/>
            <person name="Tice H."/>
            <person name="Pitluck S."/>
            <person name="Chertkov O."/>
            <person name="Brettin T."/>
            <person name="Bruce D."/>
            <person name="Han C."/>
            <person name="Detter J.C."/>
            <person name="Schmutz J."/>
            <person name="Larimer F."/>
            <person name="Land M."/>
            <person name="Hauser L."/>
            <person name="Kyrpides N."/>
            <person name="Mikhailova N."/>
            <person name="Sieprawska-Lupa M."/>
            <person name="Whitman W.B."/>
            <person name="Richardson P."/>
        </authorList>
    </citation>
    <scope>NUCLEOTIDE SEQUENCE [LARGE SCALE GENOMIC DNA]</scope>
    <source>
        <strain>C5 / ATCC BAA-1333</strain>
    </source>
</reference>
<sequence length="220" mass="25269">MSDENLLTTLDTYLASGIHIGTQQKTEDMRRFIYRVRADGLYVLDVRKTDERLRLAAKFLSNYEPEDIMAVTRRVYSVGPLKEFGKVTGINTVAGRFVPGTLTNPSAKKFAEPEVLFLSDPRVDKQALKEAIEIGIPVIGMCDTEHLTSHIDFIIPTNNKGRKSVSLMYYLIAREYMKNRGLIGEEVPFSYDQFLEKAMNVKVKMNPSNRQRGRFQRRRR</sequence>
<protein>
    <recommendedName>
        <fullName evidence="1">Small ribosomal subunit protein uS2</fullName>
    </recommendedName>
    <alternativeName>
        <fullName evidence="2">30S ribosomal protein S2</fullName>
    </alternativeName>
</protein>
<gene>
    <name evidence="1" type="primary">rps2</name>
    <name type="ordered locus">MmarC5_0907</name>
</gene>
<proteinExistence type="inferred from homology"/>
<organism>
    <name type="scientific">Methanococcus maripaludis (strain C5 / ATCC BAA-1333)</name>
    <dbReference type="NCBI Taxonomy" id="402880"/>
    <lineage>
        <taxon>Archaea</taxon>
        <taxon>Methanobacteriati</taxon>
        <taxon>Methanobacteriota</taxon>
        <taxon>Methanomada group</taxon>
        <taxon>Methanococci</taxon>
        <taxon>Methanococcales</taxon>
        <taxon>Methanococcaceae</taxon>
        <taxon>Methanococcus</taxon>
    </lineage>
</organism>
<feature type="chain" id="PRO_0000352063" description="Small ribosomal subunit protein uS2">
    <location>
        <begin position="1"/>
        <end position="220"/>
    </location>
</feature>
<accession>A4FYC9</accession>
<keyword id="KW-0687">Ribonucleoprotein</keyword>
<keyword id="KW-0689">Ribosomal protein</keyword>
<dbReference type="EMBL" id="CP000609">
    <property type="protein sequence ID" value="ABO35213.1"/>
    <property type="molecule type" value="Genomic_DNA"/>
</dbReference>
<dbReference type="RefSeq" id="WP_011868667.1">
    <property type="nucleotide sequence ID" value="NC_009135.1"/>
</dbReference>
<dbReference type="SMR" id="A4FYC9"/>
<dbReference type="STRING" id="402880.MmarC5_0907"/>
<dbReference type="GeneID" id="4929070"/>
<dbReference type="KEGG" id="mmq:MmarC5_0907"/>
<dbReference type="eggNOG" id="arCOG04245">
    <property type="taxonomic scope" value="Archaea"/>
</dbReference>
<dbReference type="HOGENOM" id="CLU_058171_3_0_2"/>
<dbReference type="OrthoDB" id="371797at2157"/>
<dbReference type="Proteomes" id="UP000000253">
    <property type="component" value="Chromosome"/>
</dbReference>
<dbReference type="GO" id="GO:0015935">
    <property type="term" value="C:small ribosomal subunit"/>
    <property type="evidence" value="ECO:0007669"/>
    <property type="project" value="InterPro"/>
</dbReference>
<dbReference type="GO" id="GO:0003735">
    <property type="term" value="F:structural constituent of ribosome"/>
    <property type="evidence" value="ECO:0007669"/>
    <property type="project" value="InterPro"/>
</dbReference>
<dbReference type="GO" id="GO:0006412">
    <property type="term" value="P:translation"/>
    <property type="evidence" value="ECO:0007669"/>
    <property type="project" value="UniProtKB-UniRule"/>
</dbReference>
<dbReference type="CDD" id="cd01425">
    <property type="entry name" value="RPS2"/>
    <property type="match status" value="1"/>
</dbReference>
<dbReference type="FunFam" id="3.40.50.10490:FF:000030">
    <property type="entry name" value="30S ribosomal protein S2"/>
    <property type="match status" value="1"/>
</dbReference>
<dbReference type="Gene3D" id="3.40.50.10490">
    <property type="entry name" value="Glucose-6-phosphate isomerase like protein, domain 1"/>
    <property type="match status" value="1"/>
</dbReference>
<dbReference type="HAMAP" id="MF_00291_A">
    <property type="entry name" value="Ribosomal_uS2_A"/>
    <property type="match status" value="1"/>
</dbReference>
<dbReference type="InterPro" id="IPR001865">
    <property type="entry name" value="Ribosomal_uS2"/>
</dbReference>
<dbReference type="InterPro" id="IPR023454">
    <property type="entry name" value="Ribosomal_uS2_arc"/>
</dbReference>
<dbReference type="InterPro" id="IPR018130">
    <property type="entry name" value="Ribosomal_uS2_CS"/>
</dbReference>
<dbReference type="InterPro" id="IPR005707">
    <property type="entry name" value="Ribosomal_uS2_euk/arc"/>
</dbReference>
<dbReference type="InterPro" id="IPR023591">
    <property type="entry name" value="Ribosomal_uS2_flav_dom_sf"/>
</dbReference>
<dbReference type="NCBIfam" id="TIGR01012">
    <property type="entry name" value="uS2_euk_arch"/>
    <property type="match status" value="1"/>
</dbReference>
<dbReference type="PANTHER" id="PTHR11489">
    <property type="entry name" value="40S RIBOSOMAL PROTEIN SA"/>
    <property type="match status" value="1"/>
</dbReference>
<dbReference type="Pfam" id="PF00318">
    <property type="entry name" value="Ribosomal_S2"/>
    <property type="match status" value="2"/>
</dbReference>
<dbReference type="PRINTS" id="PR00395">
    <property type="entry name" value="RIBOSOMALS2"/>
</dbReference>
<dbReference type="SUPFAM" id="SSF52313">
    <property type="entry name" value="Ribosomal protein S2"/>
    <property type="match status" value="1"/>
</dbReference>
<dbReference type="PROSITE" id="PS00963">
    <property type="entry name" value="RIBOSOMAL_S2_2"/>
    <property type="match status" value="1"/>
</dbReference>